<feature type="chain" id="PRO_0000125653" description="Large ribosomal subunit protein uL1">
    <location>
        <begin position="1"/>
        <end position="235"/>
    </location>
</feature>
<evidence type="ECO:0000255" key="1">
    <source>
        <dbReference type="HAMAP-Rule" id="MF_01318"/>
    </source>
</evidence>
<evidence type="ECO:0000305" key="2"/>
<reference key="1">
    <citation type="journal article" date="2004" name="Nat. Biotechnol.">
        <title>The genome sequence of the anaerobic, sulfate-reducing bacterium Desulfovibrio vulgaris Hildenborough.</title>
        <authorList>
            <person name="Heidelberg J.F."/>
            <person name="Seshadri R."/>
            <person name="Haveman S.A."/>
            <person name="Hemme C.L."/>
            <person name="Paulsen I.T."/>
            <person name="Kolonay J.F."/>
            <person name="Eisen J.A."/>
            <person name="Ward N.L."/>
            <person name="Methe B.A."/>
            <person name="Brinkac L.M."/>
            <person name="Daugherty S.C."/>
            <person name="DeBoy R.T."/>
            <person name="Dodson R.J."/>
            <person name="Durkin A.S."/>
            <person name="Madupu R."/>
            <person name="Nelson W.C."/>
            <person name="Sullivan S.A."/>
            <person name="Fouts D.E."/>
            <person name="Haft D.H."/>
            <person name="Selengut J."/>
            <person name="Peterson J.D."/>
            <person name="Davidsen T.M."/>
            <person name="Zafar N."/>
            <person name="Zhou L."/>
            <person name="Radune D."/>
            <person name="Dimitrov G."/>
            <person name="Hance M."/>
            <person name="Tran K."/>
            <person name="Khouri H.M."/>
            <person name="Gill J."/>
            <person name="Utterback T.R."/>
            <person name="Feldblyum T.V."/>
            <person name="Wall J.D."/>
            <person name="Voordouw G."/>
            <person name="Fraser C.M."/>
        </authorList>
    </citation>
    <scope>NUCLEOTIDE SEQUENCE [LARGE SCALE GENOMIC DNA]</scope>
    <source>
        <strain>ATCC 29579 / DSM 644 / CCUG 34227 / NCIMB 8303 / VKM B-1760 / Hildenborough</strain>
    </source>
</reference>
<comment type="function">
    <text evidence="1">Binds directly to 23S rRNA. The L1 stalk is quite mobile in the ribosome, and is involved in E site tRNA release.</text>
</comment>
<comment type="function">
    <text evidence="1">Protein L1 is also a translational repressor protein, it controls the translation of the L11 operon by binding to its mRNA.</text>
</comment>
<comment type="subunit">
    <text evidence="1">Part of the 50S ribosomal subunit.</text>
</comment>
<comment type="similarity">
    <text evidence="1">Belongs to the universal ribosomal protein uL1 family.</text>
</comment>
<protein>
    <recommendedName>
        <fullName evidence="1">Large ribosomal subunit protein uL1</fullName>
    </recommendedName>
    <alternativeName>
        <fullName evidence="2">50S ribosomal protein L1</fullName>
    </alternativeName>
</protein>
<accession>Q727D0</accession>
<sequence>MPKHGKKYRNATEGLDLTVKYSVEDAVAKSLAAAPAKFDETVDVAICLGVDPKYSDQMVRGAVTMPNGLGKTVRVAVFCKGEKEAEAKAAGADVAGAEELVAKIKEGWLDFDKAIATPDVMALVGQIGRVLGPRGLMPNAKTGTVTFDITTAIKEMKAGRVEFKVDKAGVLHAPLGKVSFGSEKILGNLKALIDTVNRLKPSSAKGTYMQAMAISTTMGPGVKVDPTLIKKFIEG</sequence>
<gene>
    <name evidence="1" type="primary">rplA</name>
    <name type="ordered locus">DVU_2925</name>
</gene>
<keyword id="KW-1185">Reference proteome</keyword>
<keyword id="KW-0678">Repressor</keyword>
<keyword id="KW-0687">Ribonucleoprotein</keyword>
<keyword id="KW-0689">Ribosomal protein</keyword>
<keyword id="KW-0694">RNA-binding</keyword>
<keyword id="KW-0699">rRNA-binding</keyword>
<keyword id="KW-0810">Translation regulation</keyword>
<keyword id="KW-0820">tRNA-binding</keyword>
<proteinExistence type="inferred from homology"/>
<name>RL1_NITV2</name>
<dbReference type="EMBL" id="AE017285">
    <property type="protein sequence ID" value="AAS97397.1"/>
    <property type="molecule type" value="Genomic_DNA"/>
</dbReference>
<dbReference type="RefSeq" id="WP_010940185.1">
    <property type="nucleotide sequence ID" value="NC_002937.3"/>
</dbReference>
<dbReference type="RefSeq" id="YP_012137.1">
    <property type="nucleotide sequence ID" value="NC_002937.3"/>
</dbReference>
<dbReference type="SMR" id="Q727D0"/>
<dbReference type="STRING" id="882.DVU_2925"/>
<dbReference type="PaxDb" id="882-DVU_2925"/>
<dbReference type="EnsemblBacteria" id="AAS97397">
    <property type="protein sequence ID" value="AAS97397"/>
    <property type="gene ID" value="DVU_2925"/>
</dbReference>
<dbReference type="KEGG" id="dvu:DVU_2925"/>
<dbReference type="PATRIC" id="fig|882.5.peg.2644"/>
<dbReference type="eggNOG" id="COG0081">
    <property type="taxonomic scope" value="Bacteria"/>
</dbReference>
<dbReference type="HOGENOM" id="CLU_062853_0_0_7"/>
<dbReference type="OrthoDB" id="9803740at2"/>
<dbReference type="PhylomeDB" id="Q727D0"/>
<dbReference type="Proteomes" id="UP000002194">
    <property type="component" value="Chromosome"/>
</dbReference>
<dbReference type="GO" id="GO:0022625">
    <property type="term" value="C:cytosolic large ribosomal subunit"/>
    <property type="evidence" value="ECO:0007669"/>
    <property type="project" value="TreeGrafter"/>
</dbReference>
<dbReference type="GO" id="GO:0019843">
    <property type="term" value="F:rRNA binding"/>
    <property type="evidence" value="ECO:0007669"/>
    <property type="project" value="UniProtKB-UniRule"/>
</dbReference>
<dbReference type="GO" id="GO:0003735">
    <property type="term" value="F:structural constituent of ribosome"/>
    <property type="evidence" value="ECO:0007669"/>
    <property type="project" value="InterPro"/>
</dbReference>
<dbReference type="GO" id="GO:0000049">
    <property type="term" value="F:tRNA binding"/>
    <property type="evidence" value="ECO:0007669"/>
    <property type="project" value="UniProtKB-KW"/>
</dbReference>
<dbReference type="GO" id="GO:0006417">
    <property type="term" value="P:regulation of translation"/>
    <property type="evidence" value="ECO:0007669"/>
    <property type="project" value="UniProtKB-KW"/>
</dbReference>
<dbReference type="GO" id="GO:0006412">
    <property type="term" value="P:translation"/>
    <property type="evidence" value="ECO:0007669"/>
    <property type="project" value="UniProtKB-UniRule"/>
</dbReference>
<dbReference type="CDD" id="cd00403">
    <property type="entry name" value="Ribosomal_L1"/>
    <property type="match status" value="1"/>
</dbReference>
<dbReference type="FunFam" id="3.40.50.790:FF:000001">
    <property type="entry name" value="50S ribosomal protein L1"/>
    <property type="match status" value="1"/>
</dbReference>
<dbReference type="Gene3D" id="3.30.190.20">
    <property type="match status" value="1"/>
</dbReference>
<dbReference type="Gene3D" id="3.40.50.790">
    <property type="match status" value="1"/>
</dbReference>
<dbReference type="HAMAP" id="MF_01318_B">
    <property type="entry name" value="Ribosomal_uL1_B"/>
    <property type="match status" value="1"/>
</dbReference>
<dbReference type="InterPro" id="IPR005878">
    <property type="entry name" value="Ribosom_uL1_bac-type"/>
</dbReference>
<dbReference type="InterPro" id="IPR002143">
    <property type="entry name" value="Ribosomal_uL1"/>
</dbReference>
<dbReference type="InterPro" id="IPR023674">
    <property type="entry name" value="Ribosomal_uL1-like"/>
</dbReference>
<dbReference type="InterPro" id="IPR028364">
    <property type="entry name" value="Ribosomal_uL1/biogenesis"/>
</dbReference>
<dbReference type="InterPro" id="IPR016095">
    <property type="entry name" value="Ribosomal_uL1_3-a/b-sand"/>
</dbReference>
<dbReference type="InterPro" id="IPR023673">
    <property type="entry name" value="Ribosomal_uL1_CS"/>
</dbReference>
<dbReference type="NCBIfam" id="TIGR01169">
    <property type="entry name" value="rplA_bact"/>
    <property type="match status" value="1"/>
</dbReference>
<dbReference type="PANTHER" id="PTHR36427">
    <property type="entry name" value="54S RIBOSOMAL PROTEIN L1, MITOCHONDRIAL"/>
    <property type="match status" value="1"/>
</dbReference>
<dbReference type="PANTHER" id="PTHR36427:SF3">
    <property type="entry name" value="LARGE RIBOSOMAL SUBUNIT PROTEIN UL1M"/>
    <property type="match status" value="1"/>
</dbReference>
<dbReference type="Pfam" id="PF00687">
    <property type="entry name" value="Ribosomal_L1"/>
    <property type="match status" value="1"/>
</dbReference>
<dbReference type="PIRSF" id="PIRSF002155">
    <property type="entry name" value="Ribosomal_L1"/>
    <property type="match status" value="1"/>
</dbReference>
<dbReference type="SUPFAM" id="SSF56808">
    <property type="entry name" value="Ribosomal protein L1"/>
    <property type="match status" value="1"/>
</dbReference>
<dbReference type="PROSITE" id="PS01199">
    <property type="entry name" value="RIBOSOMAL_L1"/>
    <property type="match status" value="1"/>
</dbReference>
<organism>
    <name type="scientific">Nitratidesulfovibrio vulgaris (strain ATCC 29579 / DSM 644 / CCUG 34227 / NCIMB 8303 / VKM B-1760 / Hildenborough)</name>
    <name type="common">Desulfovibrio vulgaris</name>
    <dbReference type="NCBI Taxonomy" id="882"/>
    <lineage>
        <taxon>Bacteria</taxon>
        <taxon>Pseudomonadati</taxon>
        <taxon>Thermodesulfobacteriota</taxon>
        <taxon>Desulfovibrionia</taxon>
        <taxon>Desulfovibrionales</taxon>
        <taxon>Desulfovibrionaceae</taxon>
        <taxon>Nitratidesulfovibrio</taxon>
    </lineage>
</organism>